<sequence length="156" mass="18155">MSKKKGSNTLAENRKARHDYFIEETYEAGIELVGTEVKSIRQGKANLKDSYAEIRNGEVFVRNMHISPYEQGNIYNKDPLRDRKLLLHKSEIYKLVGFTTQQGYTLIPLSLYLKHGRVKVSLAVAKGKKNYDKRDAMLEKAAKREMDRQIKERSRY</sequence>
<accession>A7G9Y7</accession>
<protein>
    <recommendedName>
        <fullName evidence="1">SsrA-binding protein</fullName>
    </recommendedName>
    <alternativeName>
        <fullName evidence="1">Small protein B</fullName>
    </alternativeName>
</protein>
<organism>
    <name type="scientific">Clostridium botulinum (strain Langeland / NCTC 10281 / Type F)</name>
    <dbReference type="NCBI Taxonomy" id="441772"/>
    <lineage>
        <taxon>Bacteria</taxon>
        <taxon>Bacillati</taxon>
        <taxon>Bacillota</taxon>
        <taxon>Clostridia</taxon>
        <taxon>Eubacteriales</taxon>
        <taxon>Clostridiaceae</taxon>
        <taxon>Clostridium</taxon>
    </lineage>
</organism>
<feature type="chain" id="PRO_1000002036" description="SsrA-binding protein">
    <location>
        <begin position="1"/>
        <end position="156"/>
    </location>
</feature>
<dbReference type="EMBL" id="CP000728">
    <property type="protein sequence ID" value="ABS40982.1"/>
    <property type="molecule type" value="Genomic_DNA"/>
</dbReference>
<dbReference type="RefSeq" id="WP_003356515.1">
    <property type="nucleotide sequence ID" value="NC_009699.1"/>
</dbReference>
<dbReference type="SMR" id="A7G9Y7"/>
<dbReference type="GeneID" id="5184489"/>
<dbReference type="KEGG" id="cbf:CLI_0299"/>
<dbReference type="HOGENOM" id="CLU_108953_0_0_9"/>
<dbReference type="Proteomes" id="UP000002410">
    <property type="component" value="Chromosome"/>
</dbReference>
<dbReference type="GO" id="GO:0005829">
    <property type="term" value="C:cytosol"/>
    <property type="evidence" value="ECO:0007669"/>
    <property type="project" value="TreeGrafter"/>
</dbReference>
<dbReference type="GO" id="GO:0003723">
    <property type="term" value="F:RNA binding"/>
    <property type="evidence" value="ECO:0007669"/>
    <property type="project" value="UniProtKB-UniRule"/>
</dbReference>
<dbReference type="GO" id="GO:0070929">
    <property type="term" value="P:trans-translation"/>
    <property type="evidence" value="ECO:0007669"/>
    <property type="project" value="UniProtKB-UniRule"/>
</dbReference>
<dbReference type="CDD" id="cd09294">
    <property type="entry name" value="SmpB"/>
    <property type="match status" value="1"/>
</dbReference>
<dbReference type="Gene3D" id="2.40.280.10">
    <property type="match status" value="1"/>
</dbReference>
<dbReference type="HAMAP" id="MF_00023">
    <property type="entry name" value="SmpB"/>
    <property type="match status" value="1"/>
</dbReference>
<dbReference type="InterPro" id="IPR023620">
    <property type="entry name" value="SmpB"/>
</dbReference>
<dbReference type="InterPro" id="IPR000037">
    <property type="entry name" value="SsrA-bd_prot"/>
</dbReference>
<dbReference type="InterPro" id="IPR020081">
    <property type="entry name" value="SsrA-bd_prot_CS"/>
</dbReference>
<dbReference type="NCBIfam" id="NF003843">
    <property type="entry name" value="PRK05422.1"/>
    <property type="match status" value="1"/>
</dbReference>
<dbReference type="NCBIfam" id="TIGR00086">
    <property type="entry name" value="smpB"/>
    <property type="match status" value="1"/>
</dbReference>
<dbReference type="PANTHER" id="PTHR30308:SF2">
    <property type="entry name" value="SSRA-BINDING PROTEIN"/>
    <property type="match status" value="1"/>
</dbReference>
<dbReference type="PANTHER" id="PTHR30308">
    <property type="entry name" value="TMRNA-BINDING COMPONENT OF TRANS-TRANSLATION TAGGING COMPLEX"/>
    <property type="match status" value="1"/>
</dbReference>
<dbReference type="Pfam" id="PF01668">
    <property type="entry name" value="SmpB"/>
    <property type="match status" value="1"/>
</dbReference>
<dbReference type="SUPFAM" id="SSF74982">
    <property type="entry name" value="Small protein B (SmpB)"/>
    <property type="match status" value="1"/>
</dbReference>
<dbReference type="PROSITE" id="PS01317">
    <property type="entry name" value="SSRP"/>
    <property type="match status" value="1"/>
</dbReference>
<proteinExistence type="inferred from homology"/>
<comment type="function">
    <text evidence="1">Required for rescue of stalled ribosomes mediated by trans-translation. Binds to transfer-messenger RNA (tmRNA), required for stable association of tmRNA with ribosomes. tmRNA and SmpB together mimic tRNA shape, replacing the anticodon stem-loop with SmpB. tmRNA is encoded by the ssrA gene; the 2 termini fold to resemble tRNA(Ala) and it encodes a 'tag peptide', a short internal open reading frame. During trans-translation Ala-aminoacylated tmRNA acts like a tRNA, entering the A-site of stalled ribosomes, displacing the stalled mRNA. The ribosome then switches to translate the ORF on the tmRNA; the nascent peptide is terminated with the 'tag peptide' encoded by the tmRNA and targeted for degradation. The ribosome is freed to recommence translation, which seems to be the essential function of trans-translation.</text>
</comment>
<comment type="subcellular location">
    <subcellularLocation>
        <location evidence="1">Cytoplasm</location>
    </subcellularLocation>
    <text evidence="1">The tmRNA-SmpB complex associates with stalled 70S ribosomes.</text>
</comment>
<comment type="similarity">
    <text evidence="1">Belongs to the SmpB family.</text>
</comment>
<gene>
    <name evidence="1" type="primary">smpB</name>
    <name type="ordered locus">CLI_0299</name>
</gene>
<keyword id="KW-0963">Cytoplasm</keyword>
<keyword id="KW-0694">RNA-binding</keyword>
<evidence type="ECO:0000255" key="1">
    <source>
        <dbReference type="HAMAP-Rule" id="MF_00023"/>
    </source>
</evidence>
<reference key="1">
    <citation type="submission" date="2007-06" db="EMBL/GenBank/DDBJ databases">
        <authorList>
            <person name="Brinkac L.M."/>
            <person name="Daugherty S."/>
            <person name="Dodson R.J."/>
            <person name="Madupu R."/>
            <person name="Brown J.L."/>
            <person name="Bruce D."/>
            <person name="Detter C."/>
            <person name="Munk C."/>
            <person name="Smith L.A."/>
            <person name="Smith T.J."/>
            <person name="White O."/>
            <person name="Brettin T.S."/>
        </authorList>
    </citation>
    <scope>NUCLEOTIDE SEQUENCE [LARGE SCALE GENOMIC DNA]</scope>
    <source>
        <strain>Langeland / NCTC 10281 / Type F</strain>
    </source>
</reference>
<name>SSRP_CLOBL</name>